<dbReference type="EMBL" id="Y14080">
    <property type="protein sequence ID" value="CAA74460.1"/>
    <property type="status" value="ALT_INIT"/>
    <property type="molecule type" value="Genomic_DNA"/>
</dbReference>
<dbReference type="EMBL" id="AL009126">
    <property type="protein sequence ID" value="CAB12808.2"/>
    <property type="molecule type" value="Genomic_DNA"/>
</dbReference>
<dbReference type="PIR" id="C69829">
    <property type="entry name" value="C69829"/>
</dbReference>
<dbReference type="RefSeq" id="NP_388850.2">
    <property type="nucleotide sequence ID" value="NC_000964.3"/>
</dbReference>
<dbReference type="RefSeq" id="WP_003233299.1">
    <property type="nucleotide sequence ID" value="NZ_OZ025638.1"/>
</dbReference>
<dbReference type="SMR" id="O07552"/>
<dbReference type="FunCoup" id="O07552">
    <property type="interactions" value="59"/>
</dbReference>
<dbReference type="STRING" id="224308.BSU09690"/>
<dbReference type="PaxDb" id="224308-BSU09690"/>
<dbReference type="EnsemblBacteria" id="CAB12808">
    <property type="protein sequence ID" value="CAB12808"/>
    <property type="gene ID" value="BSU_09690"/>
</dbReference>
<dbReference type="GeneID" id="939286"/>
<dbReference type="KEGG" id="bsu:BSU09690"/>
<dbReference type="PATRIC" id="fig|224308.179.peg.1042"/>
<dbReference type="eggNOG" id="COG0589">
    <property type="taxonomic scope" value="Bacteria"/>
</dbReference>
<dbReference type="InParanoid" id="O07552"/>
<dbReference type="OrthoDB" id="2426295at2"/>
<dbReference type="PhylomeDB" id="O07552"/>
<dbReference type="BioCyc" id="BSUB:BSU09690-MONOMER"/>
<dbReference type="Proteomes" id="UP000001570">
    <property type="component" value="Chromosome"/>
</dbReference>
<dbReference type="CDD" id="cd00293">
    <property type="entry name" value="USP-like"/>
    <property type="match status" value="1"/>
</dbReference>
<dbReference type="Gene3D" id="3.40.50.620">
    <property type="entry name" value="HUPs"/>
    <property type="match status" value="1"/>
</dbReference>
<dbReference type="InterPro" id="IPR014729">
    <property type="entry name" value="Rossmann-like_a/b/a_fold"/>
</dbReference>
<dbReference type="InterPro" id="IPR006015">
    <property type="entry name" value="Universal_stress_UspA"/>
</dbReference>
<dbReference type="InterPro" id="IPR006016">
    <property type="entry name" value="UspA"/>
</dbReference>
<dbReference type="PANTHER" id="PTHR46268">
    <property type="entry name" value="STRESS RESPONSE PROTEIN NHAX"/>
    <property type="match status" value="1"/>
</dbReference>
<dbReference type="PANTHER" id="PTHR46268:SF6">
    <property type="entry name" value="UNIVERSAL STRESS PROTEIN UP12"/>
    <property type="match status" value="1"/>
</dbReference>
<dbReference type="Pfam" id="PF00582">
    <property type="entry name" value="Usp"/>
    <property type="match status" value="1"/>
</dbReference>
<dbReference type="PRINTS" id="PR01438">
    <property type="entry name" value="UNVRSLSTRESS"/>
</dbReference>
<dbReference type="SUPFAM" id="SSF52402">
    <property type="entry name" value="Adenine nucleotide alpha hydrolases-like"/>
    <property type="match status" value="1"/>
</dbReference>
<reference key="1">
    <citation type="journal article" date="1998" name="Microbiology">
        <title>The 172 kb prkA-addAB region from 83 degrees to 97 degrees of the Bacillus subtilis chromosome contains several dysfunctional genes, the glyB marker, many genes encoding transporter proteins, and the ubiquitous hit gene.</title>
        <authorList>
            <person name="Noback M.A."/>
            <person name="Holsappel S."/>
            <person name="Kiewiet R."/>
            <person name="Terpstra P."/>
            <person name="Wambutt R."/>
            <person name="Wedler H."/>
            <person name="Venema G."/>
            <person name="Bron S."/>
        </authorList>
    </citation>
    <scope>NUCLEOTIDE SEQUENCE [GENOMIC DNA]</scope>
    <source>
        <strain>168</strain>
    </source>
</reference>
<reference key="2">
    <citation type="journal article" date="1997" name="Nature">
        <title>The complete genome sequence of the Gram-positive bacterium Bacillus subtilis.</title>
        <authorList>
            <person name="Kunst F."/>
            <person name="Ogasawara N."/>
            <person name="Moszer I."/>
            <person name="Albertini A.M."/>
            <person name="Alloni G."/>
            <person name="Azevedo V."/>
            <person name="Bertero M.G."/>
            <person name="Bessieres P."/>
            <person name="Bolotin A."/>
            <person name="Borchert S."/>
            <person name="Borriss R."/>
            <person name="Boursier L."/>
            <person name="Brans A."/>
            <person name="Braun M."/>
            <person name="Brignell S.C."/>
            <person name="Bron S."/>
            <person name="Brouillet S."/>
            <person name="Bruschi C.V."/>
            <person name="Caldwell B."/>
            <person name="Capuano V."/>
            <person name="Carter N.M."/>
            <person name="Choi S.-K."/>
            <person name="Codani J.-J."/>
            <person name="Connerton I.F."/>
            <person name="Cummings N.J."/>
            <person name="Daniel R.A."/>
            <person name="Denizot F."/>
            <person name="Devine K.M."/>
            <person name="Duesterhoeft A."/>
            <person name="Ehrlich S.D."/>
            <person name="Emmerson P.T."/>
            <person name="Entian K.-D."/>
            <person name="Errington J."/>
            <person name="Fabret C."/>
            <person name="Ferrari E."/>
            <person name="Foulger D."/>
            <person name="Fritz C."/>
            <person name="Fujita M."/>
            <person name="Fujita Y."/>
            <person name="Fuma S."/>
            <person name="Galizzi A."/>
            <person name="Galleron N."/>
            <person name="Ghim S.-Y."/>
            <person name="Glaser P."/>
            <person name="Goffeau A."/>
            <person name="Golightly E.J."/>
            <person name="Grandi G."/>
            <person name="Guiseppi G."/>
            <person name="Guy B.J."/>
            <person name="Haga K."/>
            <person name="Haiech J."/>
            <person name="Harwood C.R."/>
            <person name="Henaut A."/>
            <person name="Hilbert H."/>
            <person name="Holsappel S."/>
            <person name="Hosono S."/>
            <person name="Hullo M.-F."/>
            <person name="Itaya M."/>
            <person name="Jones L.-M."/>
            <person name="Joris B."/>
            <person name="Karamata D."/>
            <person name="Kasahara Y."/>
            <person name="Klaerr-Blanchard M."/>
            <person name="Klein C."/>
            <person name="Kobayashi Y."/>
            <person name="Koetter P."/>
            <person name="Koningstein G."/>
            <person name="Krogh S."/>
            <person name="Kumano M."/>
            <person name="Kurita K."/>
            <person name="Lapidus A."/>
            <person name="Lardinois S."/>
            <person name="Lauber J."/>
            <person name="Lazarevic V."/>
            <person name="Lee S.-M."/>
            <person name="Levine A."/>
            <person name="Liu H."/>
            <person name="Masuda S."/>
            <person name="Mauel C."/>
            <person name="Medigue C."/>
            <person name="Medina N."/>
            <person name="Mellado R.P."/>
            <person name="Mizuno M."/>
            <person name="Moestl D."/>
            <person name="Nakai S."/>
            <person name="Noback M."/>
            <person name="Noone D."/>
            <person name="O'Reilly M."/>
            <person name="Ogawa K."/>
            <person name="Ogiwara A."/>
            <person name="Oudega B."/>
            <person name="Park S.-H."/>
            <person name="Parro V."/>
            <person name="Pohl T.M."/>
            <person name="Portetelle D."/>
            <person name="Porwollik S."/>
            <person name="Prescott A.M."/>
            <person name="Presecan E."/>
            <person name="Pujic P."/>
            <person name="Purnelle B."/>
            <person name="Rapoport G."/>
            <person name="Rey M."/>
            <person name="Reynolds S."/>
            <person name="Rieger M."/>
            <person name="Rivolta C."/>
            <person name="Rocha E."/>
            <person name="Roche B."/>
            <person name="Rose M."/>
            <person name="Sadaie Y."/>
            <person name="Sato T."/>
            <person name="Scanlan E."/>
            <person name="Schleich S."/>
            <person name="Schroeter R."/>
            <person name="Scoffone F."/>
            <person name="Sekiguchi J."/>
            <person name="Sekowska A."/>
            <person name="Seror S.J."/>
            <person name="Serror P."/>
            <person name="Shin B.-S."/>
            <person name="Soldo B."/>
            <person name="Sorokin A."/>
            <person name="Tacconi E."/>
            <person name="Takagi T."/>
            <person name="Takahashi H."/>
            <person name="Takemaru K."/>
            <person name="Takeuchi M."/>
            <person name="Tamakoshi A."/>
            <person name="Tanaka T."/>
            <person name="Terpstra P."/>
            <person name="Tognoni A."/>
            <person name="Tosato V."/>
            <person name="Uchiyama S."/>
            <person name="Vandenbol M."/>
            <person name="Vannier F."/>
            <person name="Vassarotti A."/>
            <person name="Viari A."/>
            <person name="Wambutt R."/>
            <person name="Wedler E."/>
            <person name="Wedler H."/>
            <person name="Weitzenegger T."/>
            <person name="Winters P."/>
            <person name="Wipat A."/>
            <person name="Yamamoto H."/>
            <person name="Yamane K."/>
            <person name="Yasumoto K."/>
            <person name="Yata K."/>
            <person name="Yoshida K."/>
            <person name="Yoshikawa H.-F."/>
            <person name="Zumstein E."/>
            <person name="Yoshikawa H."/>
            <person name="Danchin A."/>
        </authorList>
    </citation>
    <scope>NUCLEOTIDE SEQUENCE [LARGE SCALE GENOMIC DNA]</scope>
    <source>
        <strain>168</strain>
    </source>
</reference>
<reference key="3">
    <citation type="journal article" date="2002" name="Microbiology">
        <title>Regulatory interactions between the Pho and sigma(B)-dependent general stress regulons of Bacillus subtilis.</title>
        <authorList>
            <person name="Pragai Z."/>
            <person name="Harwood C.R."/>
        </authorList>
    </citation>
    <scope>TRANSCRIPTIONAL REGULATION</scope>
</reference>
<protein>
    <recommendedName>
        <fullName>Stress response protein NhaX</fullName>
    </recommendedName>
</protein>
<accession>O07552</accession>
<keyword id="KW-1185">Reference proteome</keyword>
<keyword id="KW-0346">Stress response</keyword>
<sequence>MFHADRIIVAFDGSENSKKALLTAIDLAKTVNAAITVAHSHDMKDNQTVIDPPRPAAEASYISGGMTSVPDPLISDVTSPEPMIYEDRTEEVIAEARMMLNEQQADGDIDILEGDPAESIIEHANRISADMIVTGSRDQNRLKKLIFGSVSEKLSAKSDIPVLIVK</sequence>
<comment type="induction">
    <text evidence="1">By phosphate starvation, via the alternative sigma factor sigma-B.</text>
</comment>
<comment type="similarity">
    <text evidence="2">Belongs to the universal stress protein A family.</text>
</comment>
<comment type="sequence caution" evidence="2">
    <conflict type="erroneous initiation">
        <sequence resource="EMBL-CDS" id="CAA74460"/>
    </conflict>
</comment>
<feature type="chain" id="PRO_0000147438" description="Stress response protein NhaX">
    <location>
        <begin position="1"/>
        <end position="166"/>
    </location>
</feature>
<gene>
    <name type="primary">nhaX</name>
    <name type="synonym">yheK</name>
    <name type="ordered locus">BSU09690</name>
</gene>
<evidence type="ECO:0000269" key="1">
    <source>
    </source>
</evidence>
<evidence type="ECO:0000305" key="2"/>
<organism>
    <name type="scientific">Bacillus subtilis (strain 168)</name>
    <dbReference type="NCBI Taxonomy" id="224308"/>
    <lineage>
        <taxon>Bacteria</taxon>
        <taxon>Bacillati</taxon>
        <taxon>Bacillota</taxon>
        <taxon>Bacilli</taxon>
        <taxon>Bacillales</taxon>
        <taxon>Bacillaceae</taxon>
        <taxon>Bacillus</taxon>
    </lineage>
</organism>
<proteinExistence type="evidence at transcript level"/>
<name>NHAX_BACSU</name>